<accession>A4TM82</accession>
<keyword id="KW-0963">Cytoplasm</keyword>
<keyword id="KW-0276">Fatty acid metabolism</keyword>
<keyword id="KW-0413">Isomerase</keyword>
<keyword id="KW-0442">Lipid degradation</keyword>
<keyword id="KW-0443">Lipid metabolism</keyword>
<keyword id="KW-0456">Lyase</keyword>
<keyword id="KW-0511">Multifunctional enzyme</keyword>
<keyword id="KW-0520">NAD</keyword>
<keyword id="KW-0560">Oxidoreductase</keyword>
<gene>
    <name evidence="1" type="primary">fadJ</name>
    <name type="ordered locus">YPDSF_2013</name>
</gene>
<name>FADJ_YERPP</name>
<comment type="function">
    <text evidence="1">Catalyzes the formation of a hydroxyacyl-CoA by addition of water on enoyl-CoA. Also exhibits 3-hydroxyacyl-CoA epimerase and 3-hydroxyacyl-CoA dehydrogenase activities.</text>
</comment>
<comment type="catalytic activity">
    <reaction evidence="1">
        <text>a (3S)-3-hydroxyacyl-CoA = a (2E)-enoyl-CoA + H2O</text>
        <dbReference type="Rhea" id="RHEA:16105"/>
        <dbReference type="ChEBI" id="CHEBI:15377"/>
        <dbReference type="ChEBI" id="CHEBI:57318"/>
        <dbReference type="ChEBI" id="CHEBI:58856"/>
        <dbReference type="EC" id="4.2.1.17"/>
    </reaction>
</comment>
<comment type="catalytic activity">
    <reaction evidence="1">
        <text>a 4-saturated-(3S)-3-hydroxyacyl-CoA = a (3E)-enoyl-CoA + H2O</text>
        <dbReference type="Rhea" id="RHEA:20724"/>
        <dbReference type="ChEBI" id="CHEBI:15377"/>
        <dbReference type="ChEBI" id="CHEBI:58521"/>
        <dbReference type="ChEBI" id="CHEBI:137480"/>
        <dbReference type="EC" id="4.2.1.17"/>
    </reaction>
</comment>
<comment type="catalytic activity">
    <reaction evidence="1">
        <text>a (3S)-3-hydroxyacyl-CoA + NAD(+) = a 3-oxoacyl-CoA + NADH + H(+)</text>
        <dbReference type="Rhea" id="RHEA:22432"/>
        <dbReference type="ChEBI" id="CHEBI:15378"/>
        <dbReference type="ChEBI" id="CHEBI:57318"/>
        <dbReference type="ChEBI" id="CHEBI:57540"/>
        <dbReference type="ChEBI" id="CHEBI:57945"/>
        <dbReference type="ChEBI" id="CHEBI:90726"/>
        <dbReference type="EC" id="1.1.1.35"/>
    </reaction>
</comment>
<comment type="catalytic activity">
    <reaction evidence="1">
        <text>(3S)-3-hydroxybutanoyl-CoA = (3R)-3-hydroxybutanoyl-CoA</text>
        <dbReference type="Rhea" id="RHEA:21760"/>
        <dbReference type="ChEBI" id="CHEBI:57315"/>
        <dbReference type="ChEBI" id="CHEBI:57316"/>
        <dbReference type="EC" id="5.1.2.3"/>
    </reaction>
</comment>
<comment type="pathway">
    <text evidence="1">Lipid metabolism; fatty acid beta-oxidation.</text>
</comment>
<comment type="subunit">
    <text evidence="1">Heterotetramer of two alpha chains (FadJ) and two beta chains (FadI).</text>
</comment>
<comment type="subcellular location">
    <subcellularLocation>
        <location evidence="1">Cytoplasm</location>
    </subcellularLocation>
</comment>
<comment type="similarity">
    <text evidence="1">In the N-terminal section; belongs to the enoyl-CoA hydratase/isomerase family.</text>
</comment>
<comment type="similarity">
    <text evidence="1">In the central section; belongs to the 3-hydroxyacyl-CoA dehydrogenase family.</text>
</comment>
<proteinExistence type="inferred from homology"/>
<evidence type="ECO:0000255" key="1">
    <source>
        <dbReference type="HAMAP-Rule" id="MF_01617"/>
    </source>
</evidence>
<evidence type="ECO:0000256" key="2">
    <source>
        <dbReference type="SAM" id="MobiDB-lite"/>
    </source>
</evidence>
<organism>
    <name type="scientific">Yersinia pestis (strain Pestoides F)</name>
    <dbReference type="NCBI Taxonomy" id="386656"/>
    <lineage>
        <taxon>Bacteria</taxon>
        <taxon>Pseudomonadati</taxon>
        <taxon>Pseudomonadota</taxon>
        <taxon>Gammaproteobacteria</taxon>
        <taxon>Enterobacterales</taxon>
        <taxon>Yersiniaceae</taxon>
        <taxon>Yersinia</taxon>
    </lineage>
</organism>
<dbReference type="EC" id="4.2.1.17" evidence="1"/>
<dbReference type="EC" id="5.1.2.3" evidence="1"/>
<dbReference type="EC" id="1.1.1.35" evidence="1"/>
<dbReference type="EMBL" id="CP000668">
    <property type="protein sequence ID" value="ABP40394.1"/>
    <property type="molecule type" value="Genomic_DNA"/>
</dbReference>
<dbReference type="RefSeq" id="WP_002209705.1">
    <property type="nucleotide sequence ID" value="NZ_CP009715.1"/>
</dbReference>
<dbReference type="SMR" id="A4TM82"/>
<dbReference type="GeneID" id="57975942"/>
<dbReference type="KEGG" id="ypp:YPDSF_2013"/>
<dbReference type="PATRIC" id="fig|386656.14.peg.3484"/>
<dbReference type="UniPathway" id="UPA00659"/>
<dbReference type="GO" id="GO:0005737">
    <property type="term" value="C:cytoplasm"/>
    <property type="evidence" value="ECO:0007669"/>
    <property type="project" value="UniProtKB-SubCell"/>
</dbReference>
<dbReference type="GO" id="GO:0008692">
    <property type="term" value="F:3-hydroxybutyryl-CoA epimerase activity"/>
    <property type="evidence" value="ECO:0007669"/>
    <property type="project" value="UniProtKB-UniRule"/>
</dbReference>
<dbReference type="GO" id="GO:0004300">
    <property type="term" value="F:enoyl-CoA hydratase activity"/>
    <property type="evidence" value="ECO:0007669"/>
    <property type="project" value="UniProtKB-UniRule"/>
</dbReference>
<dbReference type="GO" id="GO:0016509">
    <property type="term" value="F:long-chain-3-hydroxyacyl-CoA dehydrogenase activity"/>
    <property type="evidence" value="ECO:0007669"/>
    <property type="project" value="TreeGrafter"/>
</dbReference>
<dbReference type="GO" id="GO:0070403">
    <property type="term" value="F:NAD+ binding"/>
    <property type="evidence" value="ECO:0007669"/>
    <property type="project" value="InterPro"/>
</dbReference>
<dbReference type="GO" id="GO:0006635">
    <property type="term" value="P:fatty acid beta-oxidation"/>
    <property type="evidence" value="ECO:0007669"/>
    <property type="project" value="UniProtKB-UniRule"/>
</dbReference>
<dbReference type="CDD" id="cd06558">
    <property type="entry name" value="crotonase-like"/>
    <property type="match status" value="1"/>
</dbReference>
<dbReference type="FunFam" id="1.10.1040.50:FF:000003">
    <property type="entry name" value="Fatty acid oxidation complex subunit alpha"/>
    <property type="match status" value="1"/>
</dbReference>
<dbReference type="FunFam" id="3.90.226.10:FF:000011">
    <property type="entry name" value="Fatty acid oxidation complex subunit alpha"/>
    <property type="match status" value="1"/>
</dbReference>
<dbReference type="FunFam" id="3.40.50.720:FF:000009">
    <property type="entry name" value="Fatty oxidation complex, alpha subunit"/>
    <property type="match status" value="1"/>
</dbReference>
<dbReference type="Gene3D" id="1.10.1040.50">
    <property type="match status" value="1"/>
</dbReference>
<dbReference type="Gene3D" id="3.90.226.10">
    <property type="entry name" value="2-enoyl-CoA Hydratase, Chain A, domain 1"/>
    <property type="match status" value="1"/>
</dbReference>
<dbReference type="Gene3D" id="3.40.50.720">
    <property type="entry name" value="NAD(P)-binding Rossmann-like Domain"/>
    <property type="match status" value="1"/>
</dbReference>
<dbReference type="HAMAP" id="MF_01617">
    <property type="entry name" value="FadJ"/>
    <property type="match status" value="1"/>
</dbReference>
<dbReference type="InterPro" id="IPR006180">
    <property type="entry name" value="3-OHacyl-CoA_DH_CS"/>
</dbReference>
<dbReference type="InterPro" id="IPR006176">
    <property type="entry name" value="3-OHacyl-CoA_DH_NAD-bd"/>
</dbReference>
<dbReference type="InterPro" id="IPR006108">
    <property type="entry name" value="3HC_DH_C"/>
</dbReference>
<dbReference type="InterPro" id="IPR008927">
    <property type="entry name" value="6-PGluconate_DH-like_C_sf"/>
</dbReference>
<dbReference type="InterPro" id="IPR029045">
    <property type="entry name" value="ClpP/crotonase-like_dom_sf"/>
</dbReference>
<dbReference type="InterPro" id="IPR001753">
    <property type="entry name" value="Enoyl-CoA_hydra/iso"/>
</dbReference>
<dbReference type="InterPro" id="IPR050136">
    <property type="entry name" value="FA_oxidation_alpha_subunit"/>
</dbReference>
<dbReference type="InterPro" id="IPR012802">
    <property type="entry name" value="FadJ"/>
</dbReference>
<dbReference type="InterPro" id="IPR036291">
    <property type="entry name" value="NAD(P)-bd_dom_sf"/>
</dbReference>
<dbReference type="NCBIfam" id="TIGR02440">
    <property type="entry name" value="FadJ"/>
    <property type="match status" value="1"/>
</dbReference>
<dbReference type="NCBIfam" id="NF008363">
    <property type="entry name" value="PRK11154.1"/>
    <property type="match status" value="1"/>
</dbReference>
<dbReference type="PANTHER" id="PTHR43612">
    <property type="entry name" value="TRIFUNCTIONAL ENZYME SUBUNIT ALPHA"/>
    <property type="match status" value="1"/>
</dbReference>
<dbReference type="PANTHER" id="PTHR43612:SF3">
    <property type="entry name" value="TRIFUNCTIONAL ENZYME SUBUNIT ALPHA, MITOCHONDRIAL"/>
    <property type="match status" value="1"/>
</dbReference>
<dbReference type="Pfam" id="PF00725">
    <property type="entry name" value="3HCDH"/>
    <property type="match status" value="2"/>
</dbReference>
<dbReference type="Pfam" id="PF02737">
    <property type="entry name" value="3HCDH_N"/>
    <property type="match status" value="1"/>
</dbReference>
<dbReference type="Pfam" id="PF00378">
    <property type="entry name" value="ECH_1"/>
    <property type="match status" value="1"/>
</dbReference>
<dbReference type="SUPFAM" id="SSF48179">
    <property type="entry name" value="6-phosphogluconate dehydrogenase C-terminal domain-like"/>
    <property type="match status" value="2"/>
</dbReference>
<dbReference type="SUPFAM" id="SSF52096">
    <property type="entry name" value="ClpP/crotonase"/>
    <property type="match status" value="1"/>
</dbReference>
<dbReference type="SUPFAM" id="SSF51735">
    <property type="entry name" value="NAD(P)-binding Rossmann-fold domains"/>
    <property type="match status" value="1"/>
</dbReference>
<dbReference type="PROSITE" id="PS00067">
    <property type="entry name" value="3HCDH"/>
    <property type="match status" value="1"/>
</dbReference>
<protein>
    <recommendedName>
        <fullName evidence="1">Fatty acid oxidation complex subunit alpha</fullName>
    </recommendedName>
    <domain>
        <recommendedName>
            <fullName evidence="1">Enoyl-CoA hydratase/3-hydroxybutyryl-CoA epimerase</fullName>
            <ecNumber evidence="1">4.2.1.17</ecNumber>
            <ecNumber evidence="1">5.1.2.3</ecNumber>
        </recommendedName>
    </domain>
    <domain>
        <recommendedName>
            <fullName evidence="1">3-hydroxyacyl-CoA dehydrogenase</fullName>
            <ecNumber evidence="1">1.1.1.35</ecNumber>
        </recommendedName>
    </domain>
</protein>
<feature type="chain" id="PRO_0000323533" description="Fatty acid oxidation complex subunit alpha">
    <location>
        <begin position="1"/>
        <end position="774"/>
    </location>
</feature>
<feature type="region of interest" description="Enoyl-CoA hydratase" evidence="1">
    <location>
        <begin position="1"/>
        <end position="224"/>
    </location>
</feature>
<feature type="region of interest" description="Disordered" evidence="2">
    <location>
        <begin position="1"/>
        <end position="31"/>
    </location>
</feature>
<feature type="region of interest" description="3-hydroxyacyl-CoA dehydrogenase" evidence="1">
    <location>
        <begin position="340"/>
        <end position="774"/>
    </location>
</feature>
<feature type="region of interest" description="Disordered" evidence="2">
    <location>
        <begin position="617"/>
        <end position="641"/>
    </location>
</feature>
<feature type="compositionally biased region" description="Polar residues" evidence="2">
    <location>
        <begin position="8"/>
        <end position="31"/>
    </location>
</feature>
<feature type="compositionally biased region" description="Polar residues" evidence="2">
    <location>
        <begin position="620"/>
        <end position="637"/>
    </location>
</feature>
<feature type="site" description="Important for catalytic activity" evidence="1">
    <location>
        <position position="152"/>
    </location>
</feature>
<feature type="site" description="Important for catalytic activity" evidence="1">
    <location>
        <position position="174"/>
    </location>
</feature>
<sequence>MSKENIVTRENTAVSENAVSEPTVNNDVGASATNSVTHPAFTLNVRPDNIGIITIDVVGDKVNTLKAEFADQIATILQQAHALPKLQGLVIVSGKPDSFIAGADITMIAACRTAHDARVLAQKGQSILAQIAAFPVPVVAAIHGACLGGGLELALACHSRICSLDDKTVLGLPEVQLGLLPGSGGTQRLPRLVGVSKALDMILTGKQIRPRQALKMGLVDDVVPRDILLDVAIQRAKAGWLNRRALPWQERLLSGPLGKALLFRIVRKKTLAKTRGHYPAAERIIDVVRKGLDQGGPSGYEAEARAFGELAMSPQSAALRSLFFATTSLKKETGSAATARAIHRVGVLGGGLMGGGIANVTATRAGLPVRIKDINPQGINQALKYTWDALGKRVRSKRMRPTEQQRQMMLISGSTDYRGFERVDIVVEAVFEDLSLKQQMVADIERFGAAHTIFASNTSSLPISQIAALAQRPEQVIGLHYFSPVDKMPLVEVIPHEKTSEETIATTVALARKQGKTAIVVADRAGFYVNRILAPYINEAARCLLDGEPIESVDNALVDFGFPVGPMMLLDEVGIDVATKIMPILVEQLGPRFAAPPSFDVILKDGRKGRKNGRGFYLYSNPTKNSSPTKNGNSPAKRNSFKWRKNKVKPVDASIYTLLGVTPKAHLGAGVITQRCTMLMLNEAVRCLDESIIRNPRDGDIGAVFGIGFPPFLGGPFRYLDSLGADKVVQALRLLVQQYGERFEPCQRLVTMAEQQQQFYPVDANIDEVTDVAS</sequence>
<reference key="1">
    <citation type="submission" date="2007-02" db="EMBL/GenBank/DDBJ databases">
        <title>Complete sequence of chromosome of Yersinia pestis Pestoides F.</title>
        <authorList>
            <consortium name="US DOE Joint Genome Institute"/>
            <person name="Copeland A."/>
            <person name="Lucas S."/>
            <person name="Lapidus A."/>
            <person name="Barry K."/>
            <person name="Detter J.C."/>
            <person name="Glavina del Rio T."/>
            <person name="Hammon N."/>
            <person name="Israni S."/>
            <person name="Dalin E."/>
            <person name="Tice H."/>
            <person name="Pitluck S."/>
            <person name="Di Bartolo G."/>
            <person name="Chain P."/>
            <person name="Malfatti S."/>
            <person name="Shin M."/>
            <person name="Vergez L."/>
            <person name="Schmutz J."/>
            <person name="Larimer F."/>
            <person name="Land M."/>
            <person name="Hauser L."/>
            <person name="Worsham P."/>
            <person name="Chu M."/>
            <person name="Bearden S."/>
            <person name="Garcia E."/>
            <person name="Richardson P."/>
        </authorList>
    </citation>
    <scope>NUCLEOTIDE SEQUENCE [LARGE SCALE GENOMIC DNA]</scope>
    <source>
        <strain>Pestoides F</strain>
    </source>
</reference>